<gene>
    <name evidence="1" type="primary">smpB</name>
    <name type="ordered locus">TC_0348</name>
</gene>
<name>SSRP_CHLMU</name>
<dbReference type="EMBL" id="AE002160">
    <property type="protein sequence ID" value="AAF39209.1"/>
    <property type="molecule type" value="Genomic_DNA"/>
</dbReference>
<dbReference type="PIR" id="D81713">
    <property type="entry name" value="D81713"/>
</dbReference>
<dbReference type="RefSeq" id="WP_010230227.1">
    <property type="nucleotide sequence ID" value="NZ_CP063055.1"/>
</dbReference>
<dbReference type="SMR" id="Q9PKW3"/>
<dbReference type="GeneID" id="1245701"/>
<dbReference type="KEGG" id="cmu:TC_0348"/>
<dbReference type="eggNOG" id="COG0691">
    <property type="taxonomic scope" value="Bacteria"/>
</dbReference>
<dbReference type="HOGENOM" id="CLU_108953_0_0_0"/>
<dbReference type="OrthoDB" id="9805462at2"/>
<dbReference type="Proteomes" id="UP000000800">
    <property type="component" value="Chromosome"/>
</dbReference>
<dbReference type="GO" id="GO:0005829">
    <property type="term" value="C:cytosol"/>
    <property type="evidence" value="ECO:0007669"/>
    <property type="project" value="TreeGrafter"/>
</dbReference>
<dbReference type="GO" id="GO:0003723">
    <property type="term" value="F:RNA binding"/>
    <property type="evidence" value="ECO:0007669"/>
    <property type="project" value="UniProtKB-UniRule"/>
</dbReference>
<dbReference type="GO" id="GO:0070929">
    <property type="term" value="P:trans-translation"/>
    <property type="evidence" value="ECO:0007669"/>
    <property type="project" value="UniProtKB-UniRule"/>
</dbReference>
<dbReference type="CDD" id="cd09294">
    <property type="entry name" value="SmpB"/>
    <property type="match status" value="1"/>
</dbReference>
<dbReference type="Gene3D" id="2.40.280.10">
    <property type="match status" value="1"/>
</dbReference>
<dbReference type="HAMAP" id="MF_00023">
    <property type="entry name" value="SmpB"/>
    <property type="match status" value="1"/>
</dbReference>
<dbReference type="InterPro" id="IPR023620">
    <property type="entry name" value="SmpB"/>
</dbReference>
<dbReference type="InterPro" id="IPR000037">
    <property type="entry name" value="SsrA-bd_prot"/>
</dbReference>
<dbReference type="InterPro" id="IPR020081">
    <property type="entry name" value="SsrA-bd_prot_CS"/>
</dbReference>
<dbReference type="NCBIfam" id="NF003843">
    <property type="entry name" value="PRK05422.1"/>
    <property type="match status" value="1"/>
</dbReference>
<dbReference type="NCBIfam" id="TIGR00086">
    <property type="entry name" value="smpB"/>
    <property type="match status" value="1"/>
</dbReference>
<dbReference type="PANTHER" id="PTHR30308:SF2">
    <property type="entry name" value="SSRA-BINDING PROTEIN"/>
    <property type="match status" value="1"/>
</dbReference>
<dbReference type="PANTHER" id="PTHR30308">
    <property type="entry name" value="TMRNA-BINDING COMPONENT OF TRANS-TRANSLATION TAGGING COMPLEX"/>
    <property type="match status" value="1"/>
</dbReference>
<dbReference type="Pfam" id="PF01668">
    <property type="entry name" value="SmpB"/>
    <property type="match status" value="1"/>
</dbReference>
<dbReference type="SUPFAM" id="SSF74982">
    <property type="entry name" value="Small protein B (SmpB)"/>
    <property type="match status" value="1"/>
</dbReference>
<dbReference type="PROSITE" id="PS01317">
    <property type="entry name" value="SSRP"/>
    <property type="match status" value="1"/>
</dbReference>
<accession>Q9PKW3</accession>
<organism>
    <name type="scientific">Chlamydia muridarum (strain MoPn / Nigg)</name>
    <dbReference type="NCBI Taxonomy" id="243161"/>
    <lineage>
        <taxon>Bacteria</taxon>
        <taxon>Pseudomonadati</taxon>
        <taxon>Chlamydiota</taxon>
        <taxon>Chlamydiia</taxon>
        <taxon>Chlamydiales</taxon>
        <taxon>Chlamydiaceae</taxon>
        <taxon>Chlamydia/Chlamydophila group</taxon>
        <taxon>Chlamydia</taxon>
    </lineage>
</organism>
<sequence length="151" mass="17383">MSVKEIVSNRKAFHNYEVLETFDAGIVLTGTEIKSLRDHGGNLGDAYVTISKGEAWLLQSSIAPYRFGNINNHEERRKRKLLLHKYELQKLDSRVSQKGLTIIPLSFFFSKGFVKVRIGCCRGKKSHDKRQALIEREKNRELAAAMKRSYR</sequence>
<reference key="1">
    <citation type="journal article" date="2000" name="Nucleic Acids Res.">
        <title>Genome sequences of Chlamydia trachomatis MoPn and Chlamydia pneumoniae AR39.</title>
        <authorList>
            <person name="Read T.D."/>
            <person name="Brunham R.C."/>
            <person name="Shen C."/>
            <person name="Gill S.R."/>
            <person name="Heidelberg J.F."/>
            <person name="White O."/>
            <person name="Hickey E.K."/>
            <person name="Peterson J.D."/>
            <person name="Utterback T.R."/>
            <person name="Berry K.J."/>
            <person name="Bass S."/>
            <person name="Linher K.D."/>
            <person name="Weidman J.F."/>
            <person name="Khouri H.M."/>
            <person name="Craven B."/>
            <person name="Bowman C."/>
            <person name="Dodson R.J."/>
            <person name="Gwinn M.L."/>
            <person name="Nelson W.C."/>
            <person name="DeBoy R.T."/>
            <person name="Kolonay J.F."/>
            <person name="McClarty G."/>
            <person name="Salzberg S.L."/>
            <person name="Eisen J.A."/>
            <person name="Fraser C.M."/>
        </authorList>
    </citation>
    <scope>NUCLEOTIDE SEQUENCE [LARGE SCALE GENOMIC DNA]</scope>
    <source>
        <strain>MoPn / Nigg</strain>
    </source>
</reference>
<protein>
    <recommendedName>
        <fullName evidence="1">SsrA-binding protein</fullName>
    </recommendedName>
    <alternativeName>
        <fullName evidence="1">Small protein B</fullName>
    </alternativeName>
</protein>
<feature type="chain" id="PRO_0000102929" description="SsrA-binding protein">
    <location>
        <begin position="1"/>
        <end position="151"/>
    </location>
</feature>
<comment type="function">
    <text evidence="1">Required for rescue of stalled ribosomes mediated by trans-translation. Binds to transfer-messenger RNA (tmRNA), required for stable association of tmRNA with ribosomes. tmRNA and SmpB together mimic tRNA shape, replacing the anticodon stem-loop with SmpB. tmRNA is encoded by the ssrA gene; the 2 termini fold to resemble tRNA(Ala) and it encodes a 'tag peptide', a short internal open reading frame. During trans-translation Ala-aminoacylated tmRNA acts like a tRNA, entering the A-site of stalled ribosomes, displacing the stalled mRNA. The ribosome then switches to translate the ORF on the tmRNA; the nascent peptide is terminated with the 'tag peptide' encoded by the tmRNA and targeted for degradation. The ribosome is freed to recommence translation, which seems to be the essential function of trans-translation.</text>
</comment>
<comment type="subcellular location">
    <subcellularLocation>
        <location evidence="1">Cytoplasm</location>
    </subcellularLocation>
    <text evidence="1">The tmRNA-SmpB complex associates with stalled 70S ribosomes.</text>
</comment>
<comment type="similarity">
    <text evidence="1">Belongs to the SmpB family.</text>
</comment>
<evidence type="ECO:0000255" key="1">
    <source>
        <dbReference type="HAMAP-Rule" id="MF_00023"/>
    </source>
</evidence>
<keyword id="KW-0963">Cytoplasm</keyword>
<keyword id="KW-0694">RNA-binding</keyword>
<proteinExistence type="inferred from homology"/>